<feature type="chain" id="PRO_1000066824" description="Alkanesulfonate monooxygenase">
    <location>
        <begin position="1"/>
        <end position="381"/>
    </location>
</feature>
<reference key="1">
    <citation type="journal article" date="2010" name="PLoS Genet.">
        <title>Genome sequence of the plant growth promoting endophytic bacterium Enterobacter sp. 638.</title>
        <authorList>
            <person name="Taghavi S."/>
            <person name="van der Lelie D."/>
            <person name="Hoffman A."/>
            <person name="Zhang Y.B."/>
            <person name="Walla M.D."/>
            <person name="Vangronsveld J."/>
            <person name="Newman L."/>
            <person name="Monchy S."/>
        </authorList>
    </citation>
    <scope>NUCLEOTIDE SEQUENCE [LARGE SCALE GENOMIC DNA]</scope>
    <source>
        <strain>638</strain>
    </source>
</reference>
<evidence type="ECO:0000255" key="1">
    <source>
        <dbReference type="HAMAP-Rule" id="MF_01229"/>
    </source>
</evidence>
<protein>
    <recommendedName>
        <fullName evidence="1">Alkanesulfonate monooxygenase</fullName>
        <ecNumber evidence="1">1.14.14.5</ecNumber>
    </recommendedName>
    <alternativeName>
        <fullName evidence="1">FMNH2-dependent aliphatic sulfonate monooxygenase</fullName>
    </alternativeName>
</protein>
<gene>
    <name evidence="1" type="primary">ssuD</name>
    <name type="ordered locus">Ent638_1454</name>
</gene>
<organism>
    <name type="scientific">Enterobacter sp. (strain 638)</name>
    <dbReference type="NCBI Taxonomy" id="399742"/>
    <lineage>
        <taxon>Bacteria</taxon>
        <taxon>Pseudomonadati</taxon>
        <taxon>Pseudomonadota</taxon>
        <taxon>Gammaproteobacteria</taxon>
        <taxon>Enterobacterales</taxon>
        <taxon>Enterobacteriaceae</taxon>
        <taxon>Enterobacter</taxon>
    </lineage>
</organism>
<sequence>MSLNLFWFLPTHGDGHYLGTEEGARPVDYGYLQQIAQAADRIGFTGVLIPTGRSCEDAWLVAAAMIPVTQRLKFLVALRPSVVSPTVAARQAATLDRLSNGRALFNLVTGSDPTELAGDGVFLDHTERYEASAEFTRVWRRLLEGDTVTYEGKHIRVRDAKLYFPPVQQPRPPLYFGGSSDVAQDLAAEQVDLYLTWGEPPEQVKEKIEQVRAKAAAHGRKVRFGIRLHVIVRETNQEAWQAADRLISHLDDDTIAKAQAALAKTDSVGQHRMASLHNGKRENLEISPNLWAGVGLVRGGAGTALVGDGPTVAARINEYADLGIDSFILSGYPHLEEAYNVGELLFPHLDVAIPEIPQPRPLQVQGEAVANEFIPRKTAQS</sequence>
<name>SSUD_ENT38</name>
<keyword id="KW-0285">Flavoprotein</keyword>
<keyword id="KW-0288">FMN</keyword>
<keyword id="KW-0503">Monooxygenase</keyword>
<keyword id="KW-0560">Oxidoreductase</keyword>
<accession>A4W8V4</accession>
<comment type="function">
    <text evidence="1">Catalyzes the desulfonation of aliphatic sulfonates.</text>
</comment>
<comment type="catalytic activity">
    <reaction evidence="1">
        <text>an alkanesulfonate + FMNH2 + O2 = an aldehyde + FMN + sulfite + H2O + 2 H(+)</text>
        <dbReference type="Rhea" id="RHEA:23064"/>
        <dbReference type="ChEBI" id="CHEBI:15377"/>
        <dbReference type="ChEBI" id="CHEBI:15378"/>
        <dbReference type="ChEBI" id="CHEBI:15379"/>
        <dbReference type="ChEBI" id="CHEBI:17359"/>
        <dbReference type="ChEBI" id="CHEBI:17478"/>
        <dbReference type="ChEBI" id="CHEBI:57618"/>
        <dbReference type="ChEBI" id="CHEBI:58210"/>
        <dbReference type="ChEBI" id="CHEBI:134249"/>
        <dbReference type="EC" id="1.14.14.5"/>
    </reaction>
</comment>
<comment type="subunit">
    <text evidence="1">Homotetramer.</text>
</comment>
<comment type="miscellaneous">
    <text evidence="1">FMNH(2) which is absolutely required for this enzymatic reaction, is provided by SsuE.</text>
</comment>
<comment type="similarity">
    <text evidence="1">Belongs to the SsuD family.</text>
</comment>
<dbReference type="EC" id="1.14.14.5" evidence="1"/>
<dbReference type="EMBL" id="CP000653">
    <property type="protein sequence ID" value="ABP60134.1"/>
    <property type="molecule type" value="Genomic_DNA"/>
</dbReference>
<dbReference type="RefSeq" id="WP_012016851.1">
    <property type="nucleotide sequence ID" value="NC_009436.1"/>
</dbReference>
<dbReference type="SMR" id="A4W8V4"/>
<dbReference type="STRING" id="399742.Ent638_1454"/>
<dbReference type="KEGG" id="ent:Ent638_1454"/>
<dbReference type="eggNOG" id="COG2141">
    <property type="taxonomic scope" value="Bacteria"/>
</dbReference>
<dbReference type="HOGENOM" id="CLU_027853_1_0_6"/>
<dbReference type="OrthoDB" id="9814695at2"/>
<dbReference type="Proteomes" id="UP000000230">
    <property type="component" value="Chromosome"/>
</dbReference>
<dbReference type="GO" id="GO:0008726">
    <property type="term" value="F:alkanesulfonate monooxygenase activity"/>
    <property type="evidence" value="ECO:0007669"/>
    <property type="project" value="UniProtKB-UniRule"/>
</dbReference>
<dbReference type="GO" id="GO:0046306">
    <property type="term" value="P:alkanesulfonate catabolic process"/>
    <property type="evidence" value="ECO:0007669"/>
    <property type="project" value="TreeGrafter"/>
</dbReference>
<dbReference type="CDD" id="cd01094">
    <property type="entry name" value="Alkanesulfonate_monoxygenase"/>
    <property type="match status" value="1"/>
</dbReference>
<dbReference type="FunFam" id="3.20.20.30:FF:000001">
    <property type="entry name" value="Alkanesulfonate monooxygenase"/>
    <property type="match status" value="1"/>
</dbReference>
<dbReference type="Gene3D" id="3.20.20.30">
    <property type="entry name" value="Luciferase-like domain"/>
    <property type="match status" value="1"/>
</dbReference>
<dbReference type="HAMAP" id="MF_01229">
    <property type="entry name" value="Alkanesulf_monooxygen"/>
    <property type="match status" value="1"/>
</dbReference>
<dbReference type="InterPro" id="IPR019911">
    <property type="entry name" value="Alkanesulphonate_mOase_FMN-dep"/>
</dbReference>
<dbReference type="InterPro" id="IPR011251">
    <property type="entry name" value="Luciferase-like_dom"/>
</dbReference>
<dbReference type="InterPro" id="IPR036661">
    <property type="entry name" value="Luciferase-like_sf"/>
</dbReference>
<dbReference type="InterPro" id="IPR050172">
    <property type="entry name" value="SsuD_RutA_monooxygenase"/>
</dbReference>
<dbReference type="NCBIfam" id="TIGR03565">
    <property type="entry name" value="alk_sulf_monoox"/>
    <property type="match status" value="1"/>
</dbReference>
<dbReference type="NCBIfam" id="NF001939">
    <property type="entry name" value="PRK00719.1"/>
    <property type="match status" value="1"/>
</dbReference>
<dbReference type="PANTHER" id="PTHR42847">
    <property type="entry name" value="ALKANESULFONATE MONOOXYGENASE"/>
    <property type="match status" value="1"/>
</dbReference>
<dbReference type="PANTHER" id="PTHR42847:SF4">
    <property type="entry name" value="ALKANESULFONATE MONOOXYGENASE-RELATED"/>
    <property type="match status" value="1"/>
</dbReference>
<dbReference type="Pfam" id="PF00296">
    <property type="entry name" value="Bac_luciferase"/>
    <property type="match status" value="1"/>
</dbReference>
<dbReference type="SUPFAM" id="SSF51679">
    <property type="entry name" value="Bacterial luciferase-like"/>
    <property type="match status" value="1"/>
</dbReference>
<proteinExistence type="inferred from homology"/>